<name>YM14_PARTE</name>
<protein>
    <recommendedName>
        <fullName>Uncharacterized mitochondrial protein ORF14</fullName>
    </recommendedName>
</protein>
<sequence>MEETTDFLFFNKYSREFSYHFFGKFFFFKEINTKLIFFFERFNLFSFFTFFSIFILSRNLVHTKNFITALFTYTKATLKKQKKNFFIFFRISFFFVVFLFFYLLFSYTLENIPVSKLFFVWGSWGAFLYIFISGFNFFGKKYTYGKYTEALQRFWKRSFSIFWLIEGFVFSAFIFLTFNASSEVVYSYDPQAFFKLHLISLRFFFFKMLALTFLILCFSMVSSLNLRKRFNMFIFNTTSLFVIIIFLIESDQYISIVNYCGFFEWSFNHSDFALDSDFRKSRTVNSYVLLIGIAKYLHILFIVFVWFFNFAKNLENNESRDYIAGTCTQNAIILYLLNWFAIYPYIKYFFRTYYYSTFSWFFFDFKNESAFNFARFLFNFWSSAFLN</sequence>
<geneLocation type="mitochondrion"/>
<accession>P15615</accession>
<comment type="subcellular location">
    <subcellularLocation>
        <location evidence="1">Mitochondrion</location>
    </subcellularLocation>
</comment>
<evidence type="ECO:0000305" key="1"/>
<proteinExistence type="predicted"/>
<reference key="1">
    <citation type="journal article" date="1990" name="Nucleic Acids Res.">
        <title>Nucleotide sequence of the mitochondrial genome of Paramecium.</title>
        <authorList>
            <person name="Pritchard A.E."/>
            <person name="Seilhamer J.J."/>
            <person name="Mahalingam R."/>
            <person name="Sable C.L."/>
            <person name="Venuti S.E."/>
            <person name="Cummings D.J."/>
        </authorList>
    </citation>
    <scope>NUCLEOTIDE SEQUENCE [GENOMIC DNA]</scope>
    <source>
        <strain>Stock 51</strain>
    </source>
</reference>
<feature type="chain" id="PRO_0000196875" description="Uncharacterized mitochondrial protein ORF14">
    <location>
        <begin position="1"/>
        <end position="387"/>
    </location>
</feature>
<organism>
    <name type="scientific">Paramecium tetraurelia</name>
    <dbReference type="NCBI Taxonomy" id="5888"/>
    <lineage>
        <taxon>Eukaryota</taxon>
        <taxon>Sar</taxon>
        <taxon>Alveolata</taxon>
        <taxon>Ciliophora</taxon>
        <taxon>Intramacronucleata</taxon>
        <taxon>Oligohymenophorea</taxon>
        <taxon>Peniculida</taxon>
        <taxon>Parameciidae</taxon>
        <taxon>Paramecium</taxon>
    </lineage>
</organism>
<keyword id="KW-0496">Mitochondrion</keyword>
<dbReference type="EMBL" id="X15917">
    <property type="protein sequence ID" value="CAA34028.1"/>
    <property type="molecule type" value="Genomic_DNA"/>
</dbReference>
<dbReference type="PIR" id="S07749">
    <property type="entry name" value="S07749"/>
</dbReference>
<dbReference type="SMR" id="P15615"/>
<dbReference type="GO" id="GO:0005739">
    <property type="term" value="C:mitochondrion"/>
    <property type="evidence" value="ECO:0007669"/>
    <property type="project" value="UniProtKB-SubCell"/>
</dbReference>